<name>POL_MLVBM</name>
<dbReference type="EC" id="3.4.23.-" evidence="7"/>
<dbReference type="EC" id="2.7.7.49" evidence="8"/>
<dbReference type="EC" id="2.7.7.7" evidence="8"/>
<dbReference type="EC" id="3.1.26.4" evidence="9"/>
<dbReference type="EC" id="2.7.7.-" evidence="3"/>
<dbReference type="EC" id="3.1.-.-" evidence="3"/>
<dbReference type="EMBL" id="AY252102">
    <property type="protein sequence ID" value="AAP37287.1"/>
    <property type="molecule type" value="Genomic_DNA"/>
</dbReference>
<dbReference type="SMR" id="Q7SVK7"/>
<dbReference type="Proteomes" id="UP000106628">
    <property type="component" value="Genome"/>
</dbReference>
<dbReference type="GO" id="GO:0044185">
    <property type="term" value="C:host cell late endosome membrane"/>
    <property type="evidence" value="ECO:0007669"/>
    <property type="project" value="UniProtKB-SubCell"/>
</dbReference>
<dbReference type="GO" id="GO:0020002">
    <property type="term" value="C:host cell plasma membrane"/>
    <property type="evidence" value="ECO:0007669"/>
    <property type="project" value="UniProtKB-SubCell"/>
</dbReference>
<dbReference type="GO" id="GO:0072494">
    <property type="term" value="C:host multivesicular body"/>
    <property type="evidence" value="ECO:0007669"/>
    <property type="project" value="UniProtKB-SubCell"/>
</dbReference>
<dbReference type="GO" id="GO:0016020">
    <property type="term" value="C:membrane"/>
    <property type="evidence" value="ECO:0007669"/>
    <property type="project" value="UniProtKB-KW"/>
</dbReference>
<dbReference type="GO" id="GO:0019013">
    <property type="term" value="C:viral nucleocapsid"/>
    <property type="evidence" value="ECO:0007669"/>
    <property type="project" value="UniProtKB-KW"/>
</dbReference>
<dbReference type="GO" id="GO:0004190">
    <property type="term" value="F:aspartic-type endopeptidase activity"/>
    <property type="evidence" value="ECO:0007669"/>
    <property type="project" value="UniProtKB-KW"/>
</dbReference>
<dbReference type="GO" id="GO:0003677">
    <property type="term" value="F:DNA binding"/>
    <property type="evidence" value="ECO:0007669"/>
    <property type="project" value="UniProtKB-KW"/>
</dbReference>
<dbReference type="GO" id="GO:0003887">
    <property type="term" value="F:DNA-directed DNA polymerase activity"/>
    <property type="evidence" value="ECO:0007669"/>
    <property type="project" value="UniProtKB-KW"/>
</dbReference>
<dbReference type="GO" id="GO:0003723">
    <property type="term" value="F:RNA binding"/>
    <property type="evidence" value="ECO:0007669"/>
    <property type="project" value="UniProtKB-KW"/>
</dbReference>
<dbReference type="GO" id="GO:0003964">
    <property type="term" value="F:RNA-directed DNA polymerase activity"/>
    <property type="evidence" value="ECO:0007669"/>
    <property type="project" value="UniProtKB-KW"/>
</dbReference>
<dbReference type="GO" id="GO:0004523">
    <property type="term" value="F:RNA-DNA hybrid ribonuclease activity"/>
    <property type="evidence" value="ECO:0007669"/>
    <property type="project" value="UniProtKB-EC"/>
</dbReference>
<dbReference type="GO" id="GO:0039660">
    <property type="term" value="F:structural constituent of virion"/>
    <property type="evidence" value="ECO:0007669"/>
    <property type="project" value="UniProtKB-KW"/>
</dbReference>
<dbReference type="GO" id="GO:0008270">
    <property type="term" value="F:zinc ion binding"/>
    <property type="evidence" value="ECO:0007669"/>
    <property type="project" value="UniProtKB-KW"/>
</dbReference>
<dbReference type="GO" id="GO:0015074">
    <property type="term" value="P:DNA integration"/>
    <property type="evidence" value="ECO:0007669"/>
    <property type="project" value="UniProtKB-KW"/>
</dbReference>
<dbReference type="GO" id="GO:0006310">
    <property type="term" value="P:DNA recombination"/>
    <property type="evidence" value="ECO:0007669"/>
    <property type="project" value="UniProtKB-KW"/>
</dbReference>
<dbReference type="GO" id="GO:0075713">
    <property type="term" value="P:establishment of integrated proviral latency"/>
    <property type="evidence" value="ECO:0007669"/>
    <property type="project" value="UniProtKB-KW"/>
</dbReference>
<dbReference type="GO" id="GO:0006508">
    <property type="term" value="P:proteolysis"/>
    <property type="evidence" value="ECO:0007669"/>
    <property type="project" value="UniProtKB-KW"/>
</dbReference>
<dbReference type="GO" id="GO:0046718">
    <property type="term" value="P:symbiont entry into host cell"/>
    <property type="evidence" value="ECO:0007669"/>
    <property type="project" value="UniProtKB-KW"/>
</dbReference>
<dbReference type="GO" id="GO:0039657">
    <property type="term" value="P:symbiont-mediated suppression of host gene expression"/>
    <property type="evidence" value="ECO:0007669"/>
    <property type="project" value="UniProtKB-KW"/>
</dbReference>
<dbReference type="GO" id="GO:0044826">
    <property type="term" value="P:viral genome integration into host DNA"/>
    <property type="evidence" value="ECO:0007669"/>
    <property type="project" value="UniProtKB-KW"/>
</dbReference>
<dbReference type="GO" id="GO:0019068">
    <property type="term" value="P:virion assembly"/>
    <property type="evidence" value="ECO:0007669"/>
    <property type="project" value="InterPro"/>
</dbReference>
<dbReference type="CDD" id="cd09273">
    <property type="entry name" value="RNase_HI_RT_Bel"/>
    <property type="match status" value="1"/>
</dbReference>
<dbReference type="CDD" id="cd06095">
    <property type="entry name" value="RP_RTVL_H_like"/>
    <property type="match status" value="1"/>
</dbReference>
<dbReference type="CDD" id="cd03715">
    <property type="entry name" value="RT_ZFREV_like"/>
    <property type="match status" value="1"/>
</dbReference>
<dbReference type="FunFam" id="3.30.420.10:FF:000094">
    <property type="entry name" value="Gag-Pol polyprotein"/>
    <property type="match status" value="1"/>
</dbReference>
<dbReference type="FunFam" id="3.30.420.10:FF:000102">
    <property type="entry name" value="Gag-Pol polyprotein"/>
    <property type="match status" value="1"/>
</dbReference>
<dbReference type="FunFam" id="3.30.70.270:FF:000020">
    <property type="entry name" value="Transposon Tf2-6 polyprotein-like Protein"/>
    <property type="match status" value="1"/>
</dbReference>
<dbReference type="Gene3D" id="1.10.340.70">
    <property type="match status" value="1"/>
</dbReference>
<dbReference type="Gene3D" id="2.30.30.850">
    <property type="match status" value="1"/>
</dbReference>
<dbReference type="Gene3D" id="3.10.20.370">
    <property type="match status" value="1"/>
</dbReference>
<dbReference type="Gene3D" id="3.30.70.270">
    <property type="match status" value="2"/>
</dbReference>
<dbReference type="Gene3D" id="2.40.70.10">
    <property type="entry name" value="Acid Proteases"/>
    <property type="match status" value="1"/>
</dbReference>
<dbReference type="Gene3D" id="1.10.150.180">
    <property type="entry name" value="Gamma-retroviral matrix domain"/>
    <property type="match status" value="1"/>
</dbReference>
<dbReference type="Gene3D" id="3.10.10.10">
    <property type="entry name" value="HIV Type 1 Reverse Transcriptase, subunit A, domain 1"/>
    <property type="match status" value="1"/>
</dbReference>
<dbReference type="Gene3D" id="1.10.375.10">
    <property type="entry name" value="Human Immunodeficiency Virus Type 1 Capsid Protein"/>
    <property type="match status" value="1"/>
</dbReference>
<dbReference type="Gene3D" id="3.30.420.10">
    <property type="entry name" value="Ribonuclease H-like superfamily/Ribonuclease H"/>
    <property type="match status" value="2"/>
</dbReference>
<dbReference type="Gene3D" id="4.10.60.10">
    <property type="entry name" value="Zinc finger, CCHC-type"/>
    <property type="match status" value="1"/>
</dbReference>
<dbReference type="InterPro" id="IPR001969">
    <property type="entry name" value="Aspartic_peptidase_AS"/>
</dbReference>
<dbReference type="InterPro" id="IPR043502">
    <property type="entry name" value="DNA/RNA_pol_sf"/>
</dbReference>
<dbReference type="InterPro" id="IPR000840">
    <property type="entry name" value="G_retro_matrix"/>
</dbReference>
<dbReference type="InterPro" id="IPR036946">
    <property type="entry name" value="G_retro_matrix_sf"/>
</dbReference>
<dbReference type="InterPro" id="IPR039464">
    <property type="entry name" value="Gag-pol_Znf-H3C2"/>
</dbReference>
<dbReference type="InterPro" id="IPR002079">
    <property type="entry name" value="Gag_p12"/>
</dbReference>
<dbReference type="InterPro" id="IPR003036">
    <property type="entry name" value="Gag_P30"/>
</dbReference>
<dbReference type="InterPro" id="IPR001584">
    <property type="entry name" value="Integrase_cat-core"/>
</dbReference>
<dbReference type="InterPro" id="IPR040643">
    <property type="entry name" value="MLVIN_C"/>
</dbReference>
<dbReference type="InterPro" id="IPR001995">
    <property type="entry name" value="Peptidase_A2_cat"/>
</dbReference>
<dbReference type="InterPro" id="IPR021109">
    <property type="entry name" value="Peptidase_aspartic_dom_sf"/>
</dbReference>
<dbReference type="InterPro" id="IPR018061">
    <property type="entry name" value="Retropepsins"/>
</dbReference>
<dbReference type="InterPro" id="IPR008919">
    <property type="entry name" value="Retrov_capsid_N"/>
</dbReference>
<dbReference type="InterPro" id="IPR050462">
    <property type="entry name" value="Retroviral_Gag-Pol_poly"/>
</dbReference>
<dbReference type="InterPro" id="IPR010999">
    <property type="entry name" value="Retrovr_matrix"/>
</dbReference>
<dbReference type="InterPro" id="IPR043128">
    <property type="entry name" value="Rev_trsase/Diguanyl_cyclase"/>
</dbReference>
<dbReference type="InterPro" id="IPR012337">
    <property type="entry name" value="RNaseH-like_sf"/>
</dbReference>
<dbReference type="InterPro" id="IPR002156">
    <property type="entry name" value="RNaseH_domain"/>
</dbReference>
<dbReference type="InterPro" id="IPR036397">
    <property type="entry name" value="RNaseH_sf"/>
</dbReference>
<dbReference type="InterPro" id="IPR000477">
    <property type="entry name" value="RT_dom"/>
</dbReference>
<dbReference type="InterPro" id="IPR041577">
    <property type="entry name" value="RT_RNaseH_2"/>
</dbReference>
<dbReference type="InterPro" id="IPR001878">
    <property type="entry name" value="Znf_CCHC"/>
</dbReference>
<dbReference type="InterPro" id="IPR036875">
    <property type="entry name" value="Znf_CCHC_sf"/>
</dbReference>
<dbReference type="PANTHER" id="PTHR33166">
    <property type="entry name" value="GAG_P30 DOMAIN-CONTAINING PROTEIN"/>
    <property type="match status" value="1"/>
</dbReference>
<dbReference type="Pfam" id="PF01140">
    <property type="entry name" value="Gag_MA"/>
    <property type="match status" value="1"/>
</dbReference>
<dbReference type="Pfam" id="PF01141">
    <property type="entry name" value="Gag_p12"/>
    <property type="match status" value="1"/>
</dbReference>
<dbReference type="Pfam" id="PF02093">
    <property type="entry name" value="Gag_p30"/>
    <property type="match status" value="1"/>
</dbReference>
<dbReference type="Pfam" id="PF18697">
    <property type="entry name" value="MLVIN_C"/>
    <property type="match status" value="1"/>
</dbReference>
<dbReference type="Pfam" id="PF00075">
    <property type="entry name" value="RNase_H"/>
    <property type="match status" value="1"/>
</dbReference>
<dbReference type="Pfam" id="PF17919">
    <property type="entry name" value="RT_RNaseH_2"/>
    <property type="match status" value="1"/>
</dbReference>
<dbReference type="Pfam" id="PF00665">
    <property type="entry name" value="rve"/>
    <property type="match status" value="1"/>
</dbReference>
<dbReference type="Pfam" id="PF00077">
    <property type="entry name" value="RVP"/>
    <property type="match status" value="1"/>
</dbReference>
<dbReference type="Pfam" id="PF00078">
    <property type="entry name" value="RVT_1"/>
    <property type="match status" value="1"/>
</dbReference>
<dbReference type="Pfam" id="PF00098">
    <property type="entry name" value="zf-CCHC"/>
    <property type="match status" value="1"/>
</dbReference>
<dbReference type="Pfam" id="PF16721">
    <property type="entry name" value="zf-H3C2"/>
    <property type="match status" value="1"/>
</dbReference>
<dbReference type="SMART" id="SM00343">
    <property type="entry name" value="ZnF_C2HC"/>
    <property type="match status" value="1"/>
</dbReference>
<dbReference type="SUPFAM" id="SSF50630">
    <property type="entry name" value="Acid proteases"/>
    <property type="match status" value="1"/>
</dbReference>
<dbReference type="SUPFAM" id="SSF56672">
    <property type="entry name" value="DNA/RNA polymerases"/>
    <property type="match status" value="1"/>
</dbReference>
<dbReference type="SUPFAM" id="SSF47836">
    <property type="entry name" value="Retroviral matrix proteins"/>
    <property type="match status" value="1"/>
</dbReference>
<dbReference type="SUPFAM" id="SSF47943">
    <property type="entry name" value="Retrovirus capsid protein, N-terminal core domain"/>
    <property type="match status" value="1"/>
</dbReference>
<dbReference type="SUPFAM" id="SSF57756">
    <property type="entry name" value="Retrovirus zinc finger-like domains"/>
    <property type="match status" value="1"/>
</dbReference>
<dbReference type="SUPFAM" id="SSF53098">
    <property type="entry name" value="Ribonuclease H-like"/>
    <property type="match status" value="2"/>
</dbReference>
<dbReference type="PROSITE" id="PS50175">
    <property type="entry name" value="ASP_PROT_RETROV"/>
    <property type="match status" value="1"/>
</dbReference>
<dbReference type="PROSITE" id="PS00141">
    <property type="entry name" value="ASP_PROTEASE"/>
    <property type="match status" value="1"/>
</dbReference>
<dbReference type="PROSITE" id="PS50994">
    <property type="entry name" value="INTEGRASE"/>
    <property type="match status" value="1"/>
</dbReference>
<dbReference type="PROSITE" id="PS50879">
    <property type="entry name" value="RNASE_H_1"/>
    <property type="match status" value="1"/>
</dbReference>
<dbReference type="PROSITE" id="PS50878">
    <property type="entry name" value="RT_POL"/>
    <property type="match status" value="1"/>
</dbReference>
<dbReference type="PROSITE" id="PS50158">
    <property type="entry name" value="ZF_CCHC"/>
    <property type="match status" value="1"/>
</dbReference>
<protein>
    <recommendedName>
        <fullName>Gag-pol polyprotein</fullName>
    </recommendedName>
    <component>
        <recommendedName>
            <fullName>Matrix protein p15</fullName>
        </recommendedName>
    </component>
    <component>
        <recommendedName>
            <fullName>RNA-binding phosphoprotein p12</fullName>
        </recommendedName>
        <alternativeName>
            <fullName>pp12</fullName>
        </alternativeName>
    </component>
    <component>
        <recommendedName>
            <fullName>Capsid protein p30</fullName>
        </recommendedName>
    </component>
    <component>
        <recommendedName>
            <fullName>Nucleocapsid protein p10-Pol</fullName>
            <shortName>NC-pol</shortName>
        </recommendedName>
    </component>
    <component>
        <recommendedName>
            <fullName>Protease</fullName>
            <ecNumber evidence="7">3.4.23.-</ecNumber>
        </recommendedName>
    </component>
    <component>
        <recommendedName>
            <fullName>Reverse transcriptase/ribonuclease H</fullName>
            <shortName>RT</shortName>
            <ecNumber evidence="8">2.7.7.49</ecNumber>
            <ecNumber evidence="8">2.7.7.7</ecNumber>
            <ecNumber evidence="9">3.1.26.4</ecNumber>
        </recommendedName>
    </component>
    <component>
        <recommendedName>
            <fullName>Integrase</fullName>
            <shortName>IN</shortName>
            <ecNumber evidence="3">2.7.7.-</ecNumber>
            <ecNumber evidence="3">3.1.-.-</ecNumber>
        </recommendedName>
    </component>
</protein>
<reference key="1">
    <citation type="journal article" date="2003" name="Viral Immunol.">
        <title>Analysis of the helper virus in murine retrovirus-induced immunodeficiency syndrome: evidence for immunoselection of the dominant and subdominant CTL epitopes of the BM5 ecotropic virus.</title>
        <authorList>
            <person name="Gaur A."/>
            <person name="Green W.R."/>
        </authorList>
    </citation>
    <scope>NUCLEOTIDE SEQUENCE [LARGE SCALE GENOMIC DNA]</scope>
</reference>
<comment type="function">
    <molecule>Gag-pol polyprotein</molecule>
    <text evidence="1">Plays a role in budding and is processed by the viral protease during virion maturation outside the cell. During budding, it recruits, in a PPXY-dependent or independent manner, Nedd4-like ubiquitin ligases that conjugate ubiquitin molecules to Gag-Pol, or to Gag-Pol binding host factors. Interaction with HECT ubiquitin ligases probably links the viral protein to the host ESCRT pathway and facilitates release.</text>
</comment>
<comment type="function">
    <molecule>Matrix protein p15</molecule>
    <text evidence="1">Targets Gag and gag-pol polyproteins to the plasma membrane via a multipartite membrane binding signal, that includes its myristoylated N-terminus. Also mediates nuclear localization of the pre-integration complex.</text>
</comment>
<comment type="function">
    <molecule>RNA-binding phosphoprotein p12</molecule>
    <text evidence="3">Constituent of the pre-integration complex (PIC) which tethers the latter to mitotic chromosomes. This allows the integration of the viral genome into the host DNA.</text>
</comment>
<comment type="function">
    <molecule>Capsid protein p30</molecule>
    <text evidence="2">Forms the spherical core of the virion that encapsulates the genomic RNA-nucleocapsid complex.</text>
</comment>
<comment type="function">
    <molecule>Nucleocapsid protein p10-Pol</molecule>
    <text evidence="1 3">Involved in the packaging and encapsidation of two copies of the genome. Binds with high affinity to conserved UCUG elements within the packaging signal, located near the 5'-end of the genome. This binding is dependent on genome dimerization. Acts as a nucleic acid chaperone which is involved in rearrangement of nucleic acid secondary structures during gRNA retrotranscription.</text>
</comment>
<comment type="function">
    <molecule>Protease</molecule>
    <text evidence="1 7">The aspartyl protease mediates proteolytic cleavages of Gag and Gag-Pol polyproteins during or shortly after the release of the virion from the plasma membrane. Cleavages take place as an ordered, step-wise cascade to yield mature proteins. This process is called maturation. Displays maximal activity during the budding process just prior to particle release from the cell (Potential). Cleaves the translation initiation factor eIF4G leading to the inhibition of host cap-dependent translation (By similarity).</text>
</comment>
<comment type="function">
    <molecule>Reverse transcriptase/ribonuclease H</molecule>
    <text evidence="5">RT is a multifunctional enzyme that converts the viral dimeric RNA genome into dsDNA in the cytoplasm, shortly after virus entry into the cell. This enzyme displays a DNA polymerase activity that can copy either DNA or RNA templates, and a ribonuclease H (RNase H) activity that cleaves the RNA strand of RNA-DNA heteroduplexes in a partially processive 3' to 5' endonucleasic mode. Conversion of viral genomic RNA into dsDNA requires many steps. A tRNA binds to the primer-binding site (PBS) situated at the 5' end of the viral RNA. RT uses the 3' end of the tRNA primer to perform a short round of RNA-dependent minus-strand DNA synthesis. The reading proceeds through the U5 region and ends after the repeated (R) region which is present at both ends of viral RNA. The portion of the RNA-DNA heteroduplex is digested by the RNase H, resulting in a ssDNA product attached to the tRNA primer. This ssDNA/tRNA hybridizes with the identical R region situated at the 3' end of viral RNA. This template exchange, known as minus-strand DNA strong stop transfer, can be either intra- or intermolecular. RT uses the 3' end of this newly synthesized short ssDNA to perform the RNA-dependent minus-strand DNA synthesis of the whole template. RNase H digests the RNA template except for a polypurine tract (PPT) situated at the 5' end of the genome. It is not clear if both polymerase and RNase H activities are simultaneous. RNase H probably can proceed both in a polymerase-dependent (RNA cut into small fragments by the same RT performing DNA synthesis) and a polymerase-independent mode (cleavage of remaining RNA fragments by free RTs). Secondly, RT performs DNA-directed plus-strand DNA synthesis using the PPT that has not been removed by RNase H as primers. PPT and tRNA primers are then removed by RNase H. The 3' and 5' ssDNA PBS regions hybridize to form a circular dsDNA intermediate. Strand displacement synthesis by RT to the PBS and PPT ends produces a blunt ended, linear dsDNA copy of the viral genome that includes long terminal repeats (LTRs) at both ends.</text>
</comment>
<comment type="function">
    <molecule>Integrase</molecule>
    <text evidence="3">Catalyzes viral DNA integration into the host chromosome, by performing a series of DNA cutting and joining reactions. This enzyme activity takes place after virion entry into a cell and reverse transcription of the RNA genome in dsDNA. The first step in the integration process is 3' processing. This step requires a complex comprising the viral genome, matrix protein and integrase. This complex is called the pre-integration complex (PIC). The integrase protein removes 2 nucleotides from each 3' end of the viral DNA, leaving recessed CA OH's at the 3' ends. In the second step that requires cell division, the PIC enters cell nucleus. In the third step, termed strand transfer, the integrase protein joins the previously processed 3' ends to the 5' ends of strands of target cellular DNA at the site of integration. The last step is viral DNA integration into host chromosome.</text>
</comment>
<comment type="catalytic activity">
    <reaction evidence="8">
        <text>DNA(n) + a 2'-deoxyribonucleoside 5'-triphosphate = DNA(n+1) + diphosphate</text>
        <dbReference type="Rhea" id="RHEA:22508"/>
        <dbReference type="Rhea" id="RHEA-COMP:17339"/>
        <dbReference type="Rhea" id="RHEA-COMP:17340"/>
        <dbReference type="ChEBI" id="CHEBI:33019"/>
        <dbReference type="ChEBI" id="CHEBI:61560"/>
        <dbReference type="ChEBI" id="CHEBI:173112"/>
        <dbReference type="EC" id="2.7.7.49"/>
    </reaction>
</comment>
<comment type="catalytic activity">
    <reaction evidence="8">
        <text>DNA(n) + a 2'-deoxyribonucleoside 5'-triphosphate = DNA(n+1) + diphosphate</text>
        <dbReference type="Rhea" id="RHEA:22508"/>
        <dbReference type="Rhea" id="RHEA-COMP:17339"/>
        <dbReference type="Rhea" id="RHEA-COMP:17340"/>
        <dbReference type="ChEBI" id="CHEBI:33019"/>
        <dbReference type="ChEBI" id="CHEBI:61560"/>
        <dbReference type="ChEBI" id="CHEBI:173112"/>
        <dbReference type="EC" id="2.7.7.7"/>
    </reaction>
</comment>
<comment type="catalytic activity">
    <reaction evidence="9">
        <text>Endonucleolytic cleavage to 5'-phosphomonoester.</text>
        <dbReference type="EC" id="3.1.26.4"/>
    </reaction>
</comment>
<comment type="cofactor">
    <cofactor evidence="8">
        <name>Mg(2+)</name>
        <dbReference type="ChEBI" id="CHEBI:18420"/>
    </cofactor>
    <text evidence="8">The RT polymerase active site binds 2 magnesium ions.</text>
</comment>
<comment type="cofactor">
    <cofactor evidence="3">
        <name>Mg(2+)</name>
        <dbReference type="ChEBI" id="CHEBI:18420"/>
    </cofactor>
    <text evidence="3">Binds 1 magnesium ion for ribonuclease H (RNase H) activity.</text>
</comment>
<comment type="cofactor">
    <cofactor evidence="3">
        <name>Mg(2+)</name>
        <dbReference type="ChEBI" id="CHEBI:18420"/>
    </cofactor>
    <text evidence="3">Magnesium ions are required for integrase activity. Binds at least 1, maybe 2 magnesium ions.</text>
</comment>
<comment type="activity regulation">
    <molecule>Protease</molecule>
    <text evidence="3">Most efficiently inhibited by Amprenavir, which is able to block Gag-Pol processing in infected cells.</text>
</comment>
<comment type="subunit">
    <molecule>Capsid protein p30</molecule>
    <text evidence="1 3">Homohexamer; further associates as homomultimer. The virus core is composed of a lattice formed from hexagonal rings, each containing six capsid monomers. Interacts with mouse UBE2I and mouse PIAS4.</text>
</comment>
<comment type="subunit">
    <molecule>Gag-pol polyprotein</molecule>
    <text evidence="1">Interacts (via PPXY motif) with host NEDD4. Interacts (via PSAP motif) with host TSG101. Interacts (via LYPX(n)L motif) with host PDCD6IP.</text>
</comment>
<comment type="subunit">
    <molecule>Reverse transcriptase/ribonuclease H</molecule>
    <text evidence="1 3">The reverse transcriptase is a monomer (Potential). Interacts (via RNase domains) with host release factor ETF1; this interaction is essential for translational readthrough of amber codon between viral gag and pol genes, as well as for viral replication.</text>
</comment>
<comment type="subunit">
    <molecule>Integrase</molecule>
    <text evidence="3">Homodimer.</text>
</comment>
<comment type="subcellular location">
    <molecule>Gag-pol polyprotein</molecule>
    <subcellularLocation>
        <location evidence="1">Virion</location>
    </subcellularLocation>
    <subcellularLocation>
        <location evidence="1">Host cell membrane</location>
        <topology evidence="1">Lipid-anchor</topology>
    </subcellularLocation>
    <subcellularLocation>
        <location evidence="1">Host late endosome membrane</location>
        <topology evidence="1">Lipid-anchor</topology>
    </subcellularLocation>
    <subcellularLocation>
        <location evidence="4">Host endosome</location>
        <location evidence="4">Host multivesicular body</location>
    </subcellularLocation>
    <text evidence="3">These locations are probably linked to virus assembly sites.</text>
</comment>
<comment type="subcellular location">
    <molecule>Matrix protein p15</molecule>
    <subcellularLocation>
        <location evidence="3">Virion</location>
    </subcellularLocation>
</comment>
<comment type="subcellular location">
    <molecule>Capsid protein p30</molecule>
    <subcellularLocation>
        <location evidence="3">Virion</location>
    </subcellularLocation>
</comment>
<comment type="subcellular location">
    <molecule>Nucleocapsid protein p10-Pol</molecule>
    <subcellularLocation>
        <location evidence="3">Virion</location>
    </subcellularLocation>
</comment>
<comment type="subcellular location">
    <molecule>Protease</molecule>
    <subcellularLocation>
        <location evidence="3">Virion</location>
    </subcellularLocation>
</comment>
<comment type="subcellular location">
    <molecule>RNA-binding phosphoprotein p12</molecule>
    <subcellularLocation>
        <location evidence="3">Host cytoplasm</location>
    </subcellularLocation>
    <text evidence="3">Localizes to the host cytoplasm early in infection and binds to the mitotic chromosomes later on.</text>
</comment>
<comment type="domain">
    <molecule>Gag-pol polyprotein</molecule>
    <text evidence="1">Late-budding domains (L domains) are short sequence motifs essential for viral particle release. They can occur individually or in close proximity within structural proteins. They interacts with sorting cellular proteins of the multivesicular body (MVB) pathway. Most of these proteins are class E vacuolar protein sorting factors belonging to ESCRT-I, ESCRT-II or ESCRT-III complexes. RNA-binding phosphoprotein p12 contains one L domain: a PPXY motif which potentially interacts with the WW domain 3 of NEDD4 E3 ubiquitin ligase. PPXY motif is essential for virus egress. Matrix protein p15 contains one L domain: a PTAP/PSAP motif, which potentially interacts with the UEV domain of TSG101. The junction between the matrix protein p15 and RNA-binding phosphoprotein p12 also contains one L domain: a LYPX(n)L motif which potentially interacts with PDCD6IP. Both PSAP and LYPX(n)L domains might play little to no role in budding and possibly drive residual virus release. contains.</text>
</comment>
<comment type="PTM">
    <molecule>Gag-pol polyprotein</molecule>
    <text evidence="1">Ubiquitinated by ITCH. Gag can recruit the ubiquitin ligase Itch in an L domain-independent manner to facilitate virus release via a mechanism that involves Gag ubiquitination.</text>
</comment>
<comment type="PTM">
    <molecule>Gag-pol polyprotein</molecule>
    <text evidence="3">Specific enzymatic cleavages by the viral protease yield mature proteins. The protease is released by autocatalytic cleavage. The polyprotein is cleaved during and after budding, this process is termed maturation.</text>
</comment>
<comment type="PTM">
    <molecule>Capsid protein p30</molecule>
    <text evidence="3">Sumoylated; which is required for virus replication.</text>
</comment>
<comment type="PTM">
    <molecule>RNA-binding phosphoprotein p12</molecule>
    <text evidence="3">Phosphorylated on serine residues.</text>
</comment>
<comment type="miscellaneous">
    <molecule>Gag-pol polyprotein</molecule>
    <text evidence="3">This protein is translated as a gag-pol fusion protein by episodic readthrough of the gag protein termination codon. Readthrough of the terminator codon TAG occurs between the codons for 537-Asp and 539-Gly.</text>
</comment>
<comment type="miscellaneous">
    <molecule>Nucleocapsid protein p10-Pol</molecule>
    <text evidence="3">Nucleocapsid protein p10-Pol released from Pol polyprotein (NC-pol) is a few amino acids shorter than the nucleocapsid protein p10 released from Gag polyprotein (NC-gag).</text>
</comment>
<comment type="miscellaneous">
    <molecule>Reverse transcriptase/ribonuclease H</molecule>
    <text evidence="8">The reverse transcriptase is an error-prone enzyme that lacks a proof-reading function. High mutations rate is a direct consequence of this characteristic. RT also displays frequent template switching leading to high recombination rate. Recombination mostly occurs between homologous regions of the two copackaged RNA genomes. If these two RNA molecules derive from different viral strains, reverse transcription will give rise to highly recombinated proviral DNAs.</text>
</comment>
<feature type="initiator methionine" description="Removed" evidence="5">
    <location>
        <position position="1"/>
    </location>
</feature>
<feature type="chain" id="PRO_0000442907" description="Gag-pol polyprotein">
    <location>
        <begin position="2"/>
        <end position="1734"/>
    </location>
</feature>
<feature type="chain" id="PRO_0000442908" description="Matrix protein p15">
    <location>
        <begin position="2"/>
        <end position="129"/>
    </location>
</feature>
<feature type="chain" id="PRO_0000442909" description="RNA-binding phosphoprotein p12">
    <location>
        <begin position="130"/>
        <end position="214"/>
    </location>
</feature>
<feature type="chain" id="PRO_0000442910" description="Capsid protein p30">
    <location>
        <begin position="215"/>
        <end position="477"/>
    </location>
</feature>
<feature type="chain" id="PRO_0000442911" description="Nucleocapsid protein p10-Pol">
    <location>
        <begin position="478"/>
        <end position="533"/>
    </location>
</feature>
<feature type="chain" id="PRO_0000442912" description="Protease">
    <location>
        <begin position="534"/>
        <end position="658"/>
    </location>
</feature>
<feature type="chain" id="PRO_0000442913" description="Reverse transcriptase/ribonuclease H">
    <location>
        <begin position="659"/>
        <end position="1329"/>
    </location>
</feature>
<feature type="chain" id="PRO_0000442914" description="Integrase">
    <location>
        <begin position="1330"/>
        <end position="1734"/>
    </location>
</feature>
<feature type="domain" description="Peptidase A2" evidence="7">
    <location>
        <begin position="560"/>
        <end position="630"/>
    </location>
</feature>
<feature type="domain" description="Reverse transcriptase" evidence="8">
    <location>
        <begin position="740"/>
        <end position="931"/>
    </location>
</feature>
<feature type="domain" description="RNase H type-1" evidence="9">
    <location>
        <begin position="1173"/>
        <end position="1319"/>
    </location>
</feature>
<feature type="domain" description="Integrase catalytic" evidence="10">
    <location>
        <begin position="1443"/>
        <end position="1601"/>
    </location>
</feature>
<feature type="zinc finger region" description="CCHC-type" evidence="6">
    <location>
        <begin position="501"/>
        <end position="518"/>
    </location>
</feature>
<feature type="zinc finger region" description="HHCC-type" evidence="3">
    <location>
        <begin position="1386"/>
        <end position="1426"/>
    </location>
</feature>
<feature type="region of interest" description="Disordered" evidence="11">
    <location>
        <begin position="112"/>
        <end position="217"/>
    </location>
</feature>
<feature type="region of interest" description="Interaction with host PIAS4" evidence="1">
    <location>
        <begin position="344"/>
        <end position="392"/>
    </location>
</feature>
<feature type="region of interest" description="Interaction with host UBE2I" evidence="1">
    <location>
        <begin position="429"/>
        <end position="434"/>
    </location>
</feature>
<feature type="region of interest" description="Disordered" evidence="11">
    <location>
        <begin position="433"/>
        <end position="498"/>
    </location>
</feature>
<feature type="region of interest" description="Disordered" evidence="11">
    <location>
        <begin position="512"/>
        <end position="551"/>
    </location>
</feature>
<feature type="short sequence motif" description="PTAP/PSAP motif" evidence="1">
    <location>
        <begin position="109"/>
        <end position="112"/>
    </location>
</feature>
<feature type="short sequence motif" description="LYPX(n)L motif" evidence="1">
    <location>
        <begin position="128"/>
        <end position="132"/>
    </location>
</feature>
<feature type="short sequence motif" description="PPXY motif" evidence="1">
    <location>
        <begin position="161"/>
        <end position="164"/>
    </location>
</feature>
<feature type="compositionally biased region" description="Basic and acidic residues" evidence="11">
    <location>
        <begin position="433"/>
        <end position="474"/>
    </location>
</feature>
<feature type="compositionally biased region" description="Basic and acidic residues" evidence="11">
    <location>
        <begin position="485"/>
        <end position="498"/>
    </location>
</feature>
<feature type="active site" description="Protease; shared with dimeric partner" evidence="7">
    <location>
        <position position="565"/>
    </location>
</feature>
<feature type="binding site" evidence="8">
    <location>
        <position position="808"/>
    </location>
    <ligand>
        <name>Mg(2+)</name>
        <dbReference type="ChEBI" id="CHEBI:18420"/>
        <label>1</label>
        <note>catalytic; for reverse transcriptase activity</note>
    </ligand>
</feature>
<feature type="binding site" evidence="8">
    <location>
        <position position="882"/>
    </location>
    <ligand>
        <name>Mg(2+)</name>
        <dbReference type="ChEBI" id="CHEBI:18420"/>
        <label>1</label>
        <note>catalytic; for reverse transcriptase activity</note>
    </ligand>
</feature>
<feature type="binding site" evidence="8">
    <location>
        <position position="883"/>
    </location>
    <ligand>
        <name>Mg(2+)</name>
        <dbReference type="ChEBI" id="CHEBI:18420"/>
        <label>1</label>
        <note>catalytic; for reverse transcriptase activity</note>
    </ligand>
</feature>
<feature type="binding site" evidence="9">
    <location>
        <position position="1182"/>
    </location>
    <ligand>
        <name>Mg(2+)</name>
        <dbReference type="ChEBI" id="CHEBI:18420"/>
        <label>2</label>
        <note>catalytic; for RNase H activity</note>
    </ligand>
</feature>
<feature type="binding site" evidence="9">
    <location>
        <position position="1220"/>
    </location>
    <ligand>
        <name>Mg(2+)</name>
        <dbReference type="ChEBI" id="CHEBI:18420"/>
        <label>2</label>
        <note>catalytic; for RNase H activity</note>
    </ligand>
</feature>
<feature type="binding site" evidence="9">
    <location>
        <position position="1241"/>
    </location>
    <ligand>
        <name>Mg(2+)</name>
        <dbReference type="ChEBI" id="CHEBI:18420"/>
        <label>2</label>
        <note>catalytic; for RNase H activity</note>
    </ligand>
</feature>
<feature type="binding site" evidence="9">
    <location>
        <position position="1311"/>
    </location>
    <ligand>
        <name>Mg(2+)</name>
        <dbReference type="ChEBI" id="CHEBI:18420"/>
        <label>2</label>
        <note>catalytic; for RNase H activity</note>
    </ligand>
</feature>
<feature type="binding site" evidence="10">
    <location>
        <position position="1454"/>
    </location>
    <ligand>
        <name>Mg(2+)</name>
        <dbReference type="ChEBI" id="CHEBI:18420"/>
        <label>3</label>
        <note>catalytic; for integrase activity</note>
    </ligand>
</feature>
<feature type="binding site" evidence="10">
    <location>
        <position position="1513"/>
    </location>
    <ligand>
        <name>Mg(2+)</name>
        <dbReference type="ChEBI" id="CHEBI:18420"/>
        <label>3</label>
        <note>catalytic; for integrase activity</note>
    </ligand>
</feature>
<feature type="site" description="Cleavage; by viral protease" evidence="3">
    <location>
        <begin position="129"/>
        <end position="130"/>
    </location>
</feature>
<feature type="site" description="Cleavage; by viral protease" evidence="3">
    <location>
        <begin position="214"/>
        <end position="215"/>
    </location>
</feature>
<feature type="site" description="Cleavage; by viral protease" evidence="3">
    <location>
        <begin position="477"/>
        <end position="478"/>
    </location>
</feature>
<feature type="site" description="Cleavage; by viral protease" evidence="3">
    <location>
        <begin position="533"/>
        <end position="534"/>
    </location>
</feature>
<feature type="site" description="Cleavage; by viral protease" evidence="3">
    <location>
        <begin position="658"/>
        <end position="659"/>
    </location>
</feature>
<feature type="site" description="Cleavage; by viral protease" evidence="3">
    <location>
        <begin position="1329"/>
        <end position="1330"/>
    </location>
</feature>
<feature type="modified residue" description="Phosphoserine; by host" evidence="3">
    <location>
        <position position="191"/>
    </location>
</feature>
<feature type="lipid moiety-binding region" description="N-myristoyl glycine; by host" evidence="5">
    <location>
        <position position="2"/>
    </location>
</feature>
<organismHost>
    <name type="scientific">Mus musculus</name>
    <name type="common">Mouse</name>
    <dbReference type="NCBI Taxonomy" id="10090"/>
</organismHost>
<organism>
    <name type="scientific">Murine leukemia virus (strain BM5 eco)</name>
    <dbReference type="NCBI Taxonomy" id="31687"/>
    <lineage>
        <taxon>Viruses</taxon>
        <taxon>Riboviria</taxon>
        <taxon>Pararnavirae</taxon>
        <taxon>Artverviricota</taxon>
        <taxon>Revtraviricetes</taxon>
        <taxon>Ortervirales</taxon>
        <taxon>Retroviridae</taxon>
        <taxon>Orthoretrovirinae</taxon>
        <taxon>Gammaretrovirus</taxon>
        <taxon>Murine leukemia virus</taxon>
    </lineage>
</organism>
<sequence>MGQTVTTPLSLTLEHWGDVQRIASNQSVGVKKRRWVTFCSAEWPTFGVGWPQDGTFNLDIILQVKSKVFSPGPHGHPDQVPYIVTWEAIAYEPPPWVKPFVSPKLSLSPTAPILPSGPSTQPPPRSALYPAFTPSIKPRPSKPQVLSDDGGPLIDLLTEDPPPYGEQGPSSPDGDGDREEATSTSEIPAPSPMVSRLRGKRDPPAADSTTSRAFPLRLGGNGQLQYWPFSSSDLYNWKNNNPSFSEDPGKLTALIESVLTTHQPTWDDCQQLLGTLLTGEEKQRVLLEARKAVRGNDGRPTQLPNEVNSAFPLERPDWDYTTPEGRNHLVLYRQLLLAGLQNAGRSPTNLAKVKGITQGPNESPSAFLERLKEAYRRYTPYDPEDPGQETNVSMSFIWQSAPAIGRKLERLEDLKSKTLGDLVREAEKIFNKRETPEEREERIRRETEEKEERRRAGDEQREKERDRRRQREMSKLLATVVTGQRQDRQGGERRRPQLDKDQCAYCKEKGHWAKDCPKKPRGPRGPRPQTSLLTLDDQGGQGQEPPPEPRITLTVGGQPVTFLVDTGAQHSVLTQNPGPLSDRSAWVQGATGGKRYRWTTDRKVHLATGKVTHSFLHVPDCPYPLLGRDLLTKLKAQIHFEGSGAQVVGPKGQPLQVLTLGIEDEYRLHETSTEPDVSLGSTWLSDFPQAWAETGGMGLAVRQAPLIIPLKATSTPVSIQQYPMSHEARLGIKPHIQRLLDQGILVPCQSPWNTPLLPVKKPGTNDYRPVQDLREVNKRVEDIHPTVPNPYNLLSGLPPSHQWYTVLDLKDAFFCLRLHPTSQPLFAFEWRDPGMGISGQLTWTRLPQGFKNSPTLFDEALHRDLADFRIQHPDLILLQYVDDILLAATSELDCQQGTRALLQTLGDLGYRASAKKAQICQKQVKYLGYLLREGQRWLTEARKETVMGQPVPKTPRQLREFLGTAGFCRLWIPGFAEMAAPLYPLTKTGTLFSWGPDQQKAYQEIKQALLTAPALGLPDLTKPFELFVDEKQGYAKGVLTQKLGPWRRPVAYLSKKLDPVAAGWPPCLRMVAAIAVLTKDAGKLTMGQPLVILAPHAVEALVKQPPDRWLSNARMTHYQAMLLDTDRVQFGPVVALNPATLLPLPEEGAPHDCLEILAETHGTRPDLTDQPIPDADHTWYTDGSSFLQEGQRKAGAAVTTETEVIWAGALPAGTSAQRAELIALTQALKMAEGKRLNVYTDSRYAFATAHIHGEIYRRRGLLTSEGREIKNKSEILALLKALFLPKRLSIIHCLGHQKGDSAEARGNRLADQAAREAAIKTPPDTSTLLIEDSTPYTPAYFHYTETDLKKLRDLGATYNQSKGYWVFQGKPVMPDQFVFELLDSLHRLTHLGYQKMKALLDRGESPYYMLNRDKTLQYVADSCTVCAQVNASKAKIGAGVRVRGHRPGTHWEIDFTEVKPGLYGYKYLLVFVDTFSGWVEAFPTKRETARVVSKKLLEEIFPRFGMPQVLGSDNGPAFTSQVSQSVADLLGIDWKLHCAYRPQSSGQVERINRTIKETLTKLTLAAGTRDWVLLLPLALYRARNTPGPHGLTPYEILYGAPPPLVNFHDPDMSELTNSPSLQAHLQALQTVQREIWKPLAEAYRDRLDQPVIPHPFRIGDSVWVRRHQTKNLEPRWKGPYTVLLTTPTALKVDGISAWIHAAHVKAATTPPIKPSWRVQRSQNPLKIRLTRGAP</sequence>
<keyword id="KW-0064">Aspartyl protease</keyword>
<keyword id="KW-0167">Capsid protein</keyword>
<keyword id="KW-0175">Coiled coil</keyword>
<keyword id="KW-0229">DNA integration</keyword>
<keyword id="KW-0233">DNA recombination</keyword>
<keyword id="KW-0238">DNA-binding</keyword>
<keyword id="KW-0239">DNA-directed DNA polymerase</keyword>
<keyword id="KW-0255">Endonuclease</keyword>
<keyword id="KW-1262">Eukaryotic host gene expression shutoff by virus</keyword>
<keyword id="KW-1193">Eukaryotic host translation shutoff by virus</keyword>
<keyword id="KW-1032">Host cell membrane</keyword>
<keyword id="KW-1035">Host cytoplasm</keyword>
<keyword id="KW-1039">Host endosome</keyword>
<keyword id="KW-1190">Host gene expression shutoff by virus</keyword>
<keyword id="KW-1043">Host membrane</keyword>
<keyword id="KW-0945">Host-virus interaction</keyword>
<keyword id="KW-0378">Hydrolase</keyword>
<keyword id="KW-0449">Lipoprotein</keyword>
<keyword id="KW-0460">Magnesium</keyword>
<keyword id="KW-0472">Membrane</keyword>
<keyword id="KW-0479">Metal-binding</keyword>
<keyword id="KW-0511">Multifunctional enzyme</keyword>
<keyword id="KW-0519">Myristate</keyword>
<keyword id="KW-0540">Nuclease</keyword>
<keyword id="KW-0548">Nucleotidyltransferase</keyword>
<keyword id="KW-0597">Phosphoprotein</keyword>
<keyword id="KW-0645">Protease</keyword>
<keyword id="KW-0694">RNA-binding</keyword>
<keyword id="KW-0695">RNA-directed DNA polymerase</keyword>
<keyword id="KW-0808">Transferase</keyword>
<keyword id="KW-0832">Ubl conjugation</keyword>
<keyword id="KW-1179">Viral genome integration</keyword>
<keyword id="KW-0468">Viral matrix protein</keyword>
<keyword id="KW-0543">Viral nucleoprotein</keyword>
<keyword id="KW-0946">Virion</keyword>
<keyword id="KW-1160">Virus entry into host cell</keyword>
<keyword id="KW-0862">Zinc</keyword>
<keyword id="KW-0863">Zinc-finger</keyword>
<evidence type="ECO:0000250" key="1">
    <source>
        <dbReference type="UniProtKB" id="P03332"/>
    </source>
</evidence>
<evidence type="ECO:0000250" key="2">
    <source>
        <dbReference type="UniProtKB" id="P03336"/>
    </source>
</evidence>
<evidence type="ECO:0000250" key="3">
    <source>
        <dbReference type="UniProtKB" id="P03355"/>
    </source>
</evidence>
<evidence type="ECO:0000250" key="4">
    <source>
        <dbReference type="UniProtKB" id="P26807"/>
    </source>
</evidence>
<evidence type="ECO:0000255" key="5"/>
<evidence type="ECO:0000255" key="6">
    <source>
        <dbReference type="PROSITE-ProRule" id="PRU00047"/>
    </source>
</evidence>
<evidence type="ECO:0000255" key="7">
    <source>
        <dbReference type="PROSITE-ProRule" id="PRU00275"/>
    </source>
</evidence>
<evidence type="ECO:0000255" key="8">
    <source>
        <dbReference type="PROSITE-ProRule" id="PRU00405"/>
    </source>
</evidence>
<evidence type="ECO:0000255" key="9">
    <source>
        <dbReference type="PROSITE-ProRule" id="PRU00408"/>
    </source>
</evidence>
<evidence type="ECO:0000255" key="10">
    <source>
        <dbReference type="PROSITE-ProRule" id="PRU00457"/>
    </source>
</evidence>
<evidence type="ECO:0000256" key="11">
    <source>
        <dbReference type="SAM" id="MobiDB-lite"/>
    </source>
</evidence>
<proteinExistence type="inferred from homology"/>
<gene>
    <name type="primary">gag-pol</name>
</gene>
<accession>Q7SVK7</accession>